<dbReference type="EMBL" id="AL445563">
    <property type="protein sequence ID" value="CAC13278.1"/>
    <property type="molecule type" value="Genomic_DNA"/>
</dbReference>
<dbReference type="PIR" id="A90525">
    <property type="entry name" value="A90525"/>
</dbReference>
<dbReference type="RefSeq" id="WP_010924909.1">
    <property type="nucleotide sequence ID" value="NC_002771.1"/>
</dbReference>
<dbReference type="SMR" id="Q98RA5"/>
<dbReference type="STRING" id="272635.gene:17576686"/>
<dbReference type="KEGG" id="mpu:MYPU_1050"/>
<dbReference type="eggNOG" id="COG0216">
    <property type="taxonomic scope" value="Bacteria"/>
</dbReference>
<dbReference type="HOGENOM" id="CLU_036856_0_1_14"/>
<dbReference type="BioCyc" id="MPUL272635:G1GT6-104-MONOMER"/>
<dbReference type="Proteomes" id="UP000000528">
    <property type="component" value="Chromosome"/>
</dbReference>
<dbReference type="GO" id="GO:0005737">
    <property type="term" value="C:cytoplasm"/>
    <property type="evidence" value="ECO:0007669"/>
    <property type="project" value="UniProtKB-SubCell"/>
</dbReference>
<dbReference type="GO" id="GO:0016149">
    <property type="term" value="F:translation release factor activity, codon specific"/>
    <property type="evidence" value="ECO:0007669"/>
    <property type="project" value="UniProtKB-UniRule"/>
</dbReference>
<dbReference type="FunFam" id="3.30.160.20:FF:000004">
    <property type="entry name" value="Peptide chain release factor 1"/>
    <property type="match status" value="1"/>
</dbReference>
<dbReference type="FunFam" id="3.30.70.1660:FF:000002">
    <property type="entry name" value="Peptide chain release factor 1"/>
    <property type="match status" value="1"/>
</dbReference>
<dbReference type="Gene3D" id="3.30.160.20">
    <property type="match status" value="1"/>
</dbReference>
<dbReference type="Gene3D" id="3.30.70.1660">
    <property type="match status" value="1"/>
</dbReference>
<dbReference type="Gene3D" id="6.10.140.1950">
    <property type="match status" value="1"/>
</dbReference>
<dbReference type="HAMAP" id="MF_00093">
    <property type="entry name" value="Rel_fac_1"/>
    <property type="match status" value="1"/>
</dbReference>
<dbReference type="InterPro" id="IPR005139">
    <property type="entry name" value="PCRF"/>
</dbReference>
<dbReference type="InterPro" id="IPR000352">
    <property type="entry name" value="Pep_chain_release_fac_I"/>
</dbReference>
<dbReference type="InterPro" id="IPR045853">
    <property type="entry name" value="Pep_chain_release_fac_I_sf"/>
</dbReference>
<dbReference type="InterPro" id="IPR050057">
    <property type="entry name" value="Prokaryotic/Mito_RF"/>
</dbReference>
<dbReference type="InterPro" id="IPR004373">
    <property type="entry name" value="RF-1"/>
</dbReference>
<dbReference type="NCBIfam" id="TIGR00019">
    <property type="entry name" value="prfA"/>
    <property type="match status" value="1"/>
</dbReference>
<dbReference type="NCBIfam" id="NF001859">
    <property type="entry name" value="PRK00591.1"/>
    <property type="match status" value="1"/>
</dbReference>
<dbReference type="PANTHER" id="PTHR43804">
    <property type="entry name" value="LD18447P"/>
    <property type="match status" value="1"/>
</dbReference>
<dbReference type="PANTHER" id="PTHR43804:SF7">
    <property type="entry name" value="LD18447P"/>
    <property type="match status" value="1"/>
</dbReference>
<dbReference type="Pfam" id="PF03462">
    <property type="entry name" value="PCRF"/>
    <property type="match status" value="1"/>
</dbReference>
<dbReference type="Pfam" id="PF00472">
    <property type="entry name" value="RF-1"/>
    <property type="match status" value="1"/>
</dbReference>
<dbReference type="SMART" id="SM00937">
    <property type="entry name" value="PCRF"/>
    <property type="match status" value="1"/>
</dbReference>
<dbReference type="SUPFAM" id="SSF75620">
    <property type="entry name" value="Release factor"/>
    <property type="match status" value="1"/>
</dbReference>
<dbReference type="PROSITE" id="PS00745">
    <property type="entry name" value="RF_PROK_I"/>
    <property type="match status" value="1"/>
</dbReference>
<gene>
    <name evidence="1" type="primary">prfA</name>
    <name type="ordered locus">MYPU_1050</name>
</gene>
<feature type="chain" id="PRO_0000177710" description="Peptide chain release factor 1">
    <location>
        <begin position="1"/>
        <end position="359"/>
    </location>
</feature>
<feature type="modified residue" description="N5-methylglutamine" evidence="1">
    <location>
        <position position="238"/>
    </location>
</feature>
<keyword id="KW-0963">Cytoplasm</keyword>
<keyword id="KW-0488">Methylation</keyword>
<keyword id="KW-0648">Protein biosynthesis</keyword>
<keyword id="KW-1185">Reference proteome</keyword>
<organism>
    <name type="scientific">Mycoplasmopsis pulmonis (strain UAB CTIP)</name>
    <name type="common">Mycoplasma pulmonis</name>
    <dbReference type="NCBI Taxonomy" id="272635"/>
    <lineage>
        <taxon>Bacteria</taxon>
        <taxon>Bacillati</taxon>
        <taxon>Mycoplasmatota</taxon>
        <taxon>Mycoplasmoidales</taxon>
        <taxon>Metamycoplasmataceae</taxon>
        <taxon>Mycoplasmopsis</taxon>
    </lineage>
</organism>
<reference key="1">
    <citation type="journal article" date="2001" name="Nucleic Acids Res.">
        <title>The complete genome sequence of the murine respiratory pathogen Mycoplasma pulmonis.</title>
        <authorList>
            <person name="Chambaud I."/>
            <person name="Heilig R."/>
            <person name="Ferris S."/>
            <person name="Barbe V."/>
            <person name="Samson D."/>
            <person name="Galisson F."/>
            <person name="Moszer I."/>
            <person name="Dybvig K."/>
            <person name="Wroblewski H."/>
            <person name="Viari A."/>
            <person name="Rocha E.P.C."/>
            <person name="Blanchard A."/>
        </authorList>
    </citation>
    <scope>NUCLEOTIDE SEQUENCE [LARGE SCALE GENOMIC DNA]</scope>
    <source>
        <strain>UAB CTIP</strain>
    </source>
</reference>
<protein>
    <recommendedName>
        <fullName evidence="1">Peptide chain release factor 1</fullName>
        <shortName evidence="1">RF-1</shortName>
    </recommendedName>
</protein>
<name>RF1_MYCPU</name>
<accession>Q98RA5</accession>
<sequence length="359" mass="40530">MEKSMYNSLKSILDKYQELNQELLKPEVLSDIKLYKKFSRELNSIKSISEEFSKYLNYEKTIESSKIILAQEKDEELISLAKKEILECEEKMSSLVEELKILLLPKDKNDELDVIMEIRGAAGGDEANIFAGDLFEMYSKWANNNNMKVSVLDRNYATSGGFTLIVFTISGEKAYSKLKFESGVHRVQRIPVTESKGRVHTSTATVTAMPEIDDDIEVEINPSDLKIDTFRSSGAGGQSVNTTDSAVRITHIPTGIISSSQEGRSQISNRELALKILKAKLYDHENQKKLEKVGQYRKLAGSGARSEKIRTYNYPQDRVTDHRINFSSSLKQIMEGKLQIIIDSLLAEEQAEKIKEVGI</sequence>
<evidence type="ECO:0000255" key="1">
    <source>
        <dbReference type="HAMAP-Rule" id="MF_00093"/>
    </source>
</evidence>
<comment type="function">
    <text evidence="1">Peptide chain release factor 1 directs the termination of translation in response to the peptide chain termination codons UAG and UAA.</text>
</comment>
<comment type="subcellular location">
    <subcellularLocation>
        <location evidence="1">Cytoplasm</location>
    </subcellularLocation>
</comment>
<comment type="PTM">
    <text evidence="1">Methylated by PrmC. Methylation increases the termination efficiency of RF1.</text>
</comment>
<comment type="similarity">
    <text evidence="1">Belongs to the prokaryotic/mitochondrial release factor family.</text>
</comment>
<proteinExistence type="inferred from homology"/>